<reference key="1">
    <citation type="journal article" date="2009" name="PLoS Genet.">
        <title>Organised genome dynamics in the Escherichia coli species results in highly diverse adaptive paths.</title>
        <authorList>
            <person name="Touchon M."/>
            <person name="Hoede C."/>
            <person name="Tenaillon O."/>
            <person name="Barbe V."/>
            <person name="Baeriswyl S."/>
            <person name="Bidet P."/>
            <person name="Bingen E."/>
            <person name="Bonacorsi S."/>
            <person name="Bouchier C."/>
            <person name="Bouvet O."/>
            <person name="Calteau A."/>
            <person name="Chiapello H."/>
            <person name="Clermont O."/>
            <person name="Cruveiller S."/>
            <person name="Danchin A."/>
            <person name="Diard M."/>
            <person name="Dossat C."/>
            <person name="Karoui M.E."/>
            <person name="Frapy E."/>
            <person name="Garry L."/>
            <person name="Ghigo J.M."/>
            <person name="Gilles A.M."/>
            <person name="Johnson J."/>
            <person name="Le Bouguenec C."/>
            <person name="Lescat M."/>
            <person name="Mangenot S."/>
            <person name="Martinez-Jehanne V."/>
            <person name="Matic I."/>
            <person name="Nassif X."/>
            <person name="Oztas S."/>
            <person name="Petit M.A."/>
            <person name="Pichon C."/>
            <person name="Rouy Z."/>
            <person name="Ruf C.S."/>
            <person name="Schneider D."/>
            <person name="Tourret J."/>
            <person name="Vacherie B."/>
            <person name="Vallenet D."/>
            <person name="Medigue C."/>
            <person name="Rocha E.P.C."/>
            <person name="Denamur E."/>
        </authorList>
    </citation>
    <scope>NUCLEOTIDE SEQUENCE [LARGE SCALE GENOMIC DNA]</scope>
    <source>
        <strain>55989 / EAEC</strain>
    </source>
</reference>
<proteinExistence type="inferred from homology"/>
<accession>B7LD52</accession>
<dbReference type="EC" id="2.1.1.189" evidence="1"/>
<dbReference type="EMBL" id="CU928145">
    <property type="protein sequence ID" value="CAU96769.1"/>
    <property type="molecule type" value="Genomic_DNA"/>
</dbReference>
<dbReference type="RefSeq" id="WP_001149732.1">
    <property type="nucleotide sequence ID" value="NC_011748.1"/>
</dbReference>
<dbReference type="SMR" id="B7LD52"/>
<dbReference type="GeneID" id="75202489"/>
<dbReference type="KEGG" id="eck:EC55989_0904"/>
<dbReference type="HOGENOM" id="CLU_014689_0_0_6"/>
<dbReference type="Proteomes" id="UP000000746">
    <property type="component" value="Chromosome"/>
</dbReference>
<dbReference type="GO" id="GO:0051539">
    <property type="term" value="F:4 iron, 4 sulfur cluster binding"/>
    <property type="evidence" value="ECO:0007669"/>
    <property type="project" value="UniProtKB-KW"/>
</dbReference>
<dbReference type="GO" id="GO:0005506">
    <property type="term" value="F:iron ion binding"/>
    <property type="evidence" value="ECO:0007669"/>
    <property type="project" value="UniProtKB-UniRule"/>
</dbReference>
<dbReference type="GO" id="GO:0070041">
    <property type="term" value="F:rRNA (uridine-C5-)-methyltransferase activity"/>
    <property type="evidence" value="ECO:0007669"/>
    <property type="project" value="UniProtKB-UniRule"/>
</dbReference>
<dbReference type="GO" id="GO:0070475">
    <property type="term" value="P:rRNA base methylation"/>
    <property type="evidence" value="ECO:0007669"/>
    <property type="project" value="TreeGrafter"/>
</dbReference>
<dbReference type="CDD" id="cd02440">
    <property type="entry name" value="AdoMet_MTases"/>
    <property type="match status" value="1"/>
</dbReference>
<dbReference type="FunFam" id="2.40.50.1070:FF:000002">
    <property type="entry name" value="23S rRNA (uracil(747)-C(5))-methyltransferase RlmC"/>
    <property type="match status" value="1"/>
</dbReference>
<dbReference type="FunFam" id="3.40.50.150:FF:000049">
    <property type="entry name" value="23S rRNA (uracil(747)-C(5))-methyltransferase RlmC"/>
    <property type="match status" value="1"/>
</dbReference>
<dbReference type="Gene3D" id="2.40.50.1070">
    <property type="match status" value="1"/>
</dbReference>
<dbReference type="Gene3D" id="3.40.50.150">
    <property type="entry name" value="Vaccinia Virus protein VP39"/>
    <property type="match status" value="1"/>
</dbReference>
<dbReference type="HAMAP" id="MF_01012">
    <property type="entry name" value="23SrRNA_methyltr_RlmC"/>
    <property type="match status" value="1"/>
</dbReference>
<dbReference type="InterPro" id="IPR011825">
    <property type="entry name" value="23SrRNA_MeTrfase_RlmC"/>
</dbReference>
<dbReference type="InterPro" id="IPR030390">
    <property type="entry name" value="MeTrfase_TrmA_AS"/>
</dbReference>
<dbReference type="InterPro" id="IPR030391">
    <property type="entry name" value="MeTrfase_TrmA_CS"/>
</dbReference>
<dbReference type="InterPro" id="IPR029063">
    <property type="entry name" value="SAM-dependent_MTases_sf"/>
</dbReference>
<dbReference type="InterPro" id="IPR010280">
    <property type="entry name" value="U5_MeTrfase_fam"/>
</dbReference>
<dbReference type="NCBIfam" id="TIGR02085">
    <property type="entry name" value="meth_trns_rumB"/>
    <property type="match status" value="1"/>
</dbReference>
<dbReference type="PANTHER" id="PTHR11061">
    <property type="entry name" value="RNA M5U METHYLTRANSFERASE"/>
    <property type="match status" value="1"/>
</dbReference>
<dbReference type="PANTHER" id="PTHR11061:SF30">
    <property type="entry name" value="TRNA (URACIL(54)-C(5))-METHYLTRANSFERASE"/>
    <property type="match status" value="1"/>
</dbReference>
<dbReference type="Pfam" id="PF05958">
    <property type="entry name" value="tRNA_U5-meth_tr"/>
    <property type="match status" value="1"/>
</dbReference>
<dbReference type="SUPFAM" id="SSF53335">
    <property type="entry name" value="S-adenosyl-L-methionine-dependent methyltransferases"/>
    <property type="match status" value="1"/>
</dbReference>
<dbReference type="PROSITE" id="PS51687">
    <property type="entry name" value="SAM_MT_RNA_M5U"/>
    <property type="match status" value="1"/>
</dbReference>
<dbReference type="PROSITE" id="PS01230">
    <property type="entry name" value="TRMA_1"/>
    <property type="match status" value="1"/>
</dbReference>
<dbReference type="PROSITE" id="PS01231">
    <property type="entry name" value="TRMA_2"/>
    <property type="match status" value="1"/>
</dbReference>
<gene>
    <name evidence="1" type="primary">rlmC</name>
    <name type="synonym">rumB</name>
    <name type="ordered locus">EC55989_0904</name>
</gene>
<sequence>MQCALYDAGRCRSCQWITQPIPEQLSAKTADLKNLLADFPVEEWCAPVSGPEQGFRNKAKMVVSGSVEKPLLGMLHRDGTPEDLCDCPLYPASFAPVFAALKPFIARAGLTPYNVARKRGELKYILLTESQSDGGMMLRFVLRSETKLAQLRKALPWLQEQLPQLKVITVNIQPVHMAIMEGETEIYLTEQQALAERFNDVPLWIRPQSFFQTNPAVASQLYATARDWVRQLPVKHMWDLFCGVGGFGLHCATPDMQLTGIEIASEAIACAKQSAAELGLTRLQFQALDSTQFATAQGEVPELVLVNPPRRGIGKPLCDYLSTMAPRFIIYSSCNAQTMAKDIRELPGYRIERVQLFDMFPHTAHYEVLTLLVKQ</sequence>
<comment type="function">
    <text evidence="1">Catalyzes the formation of 5-methyl-uridine at position 747 (m5U747) in 23S rRNA.</text>
</comment>
<comment type="catalytic activity">
    <reaction evidence="1">
        <text>uridine(747) in 23S rRNA + S-adenosyl-L-methionine = 5-methyluridine(747) in 23S rRNA + S-adenosyl-L-homocysteine + H(+)</text>
        <dbReference type="Rhea" id="RHEA:42628"/>
        <dbReference type="Rhea" id="RHEA-COMP:10154"/>
        <dbReference type="Rhea" id="RHEA-COMP:10155"/>
        <dbReference type="ChEBI" id="CHEBI:15378"/>
        <dbReference type="ChEBI" id="CHEBI:57856"/>
        <dbReference type="ChEBI" id="CHEBI:59789"/>
        <dbReference type="ChEBI" id="CHEBI:65315"/>
        <dbReference type="ChEBI" id="CHEBI:74447"/>
        <dbReference type="EC" id="2.1.1.189"/>
    </reaction>
</comment>
<comment type="similarity">
    <text evidence="1">Belongs to the class I-like SAM-binding methyltransferase superfamily. RNA M5U methyltransferase family. RlmC subfamily.</text>
</comment>
<keyword id="KW-0004">4Fe-4S</keyword>
<keyword id="KW-0408">Iron</keyword>
<keyword id="KW-0411">Iron-sulfur</keyword>
<keyword id="KW-0479">Metal-binding</keyword>
<keyword id="KW-0489">Methyltransferase</keyword>
<keyword id="KW-1185">Reference proteome</keyword>
<keyword id="KW-0698">rRNA processing</keyword>
<keyword id="KW-0949">S-adenosyl-L-methionine</keyword>
<keyword id="KW-0808">Transferase</keyword>
<organism>
    <name type="scientific">Escherichia coli (strain 55989 / EAEC)</name>
    <dbReference type="NCBI Taxonomy" id="585055"/>
    <lineage>
        <taxon>Bacteria</taxon>
        <taxon>Pseudomonadati</taxon>
        <taxon>Pseudomonadota</taxon>
        <taxon>Gammaproteobacteria</taxon>
        <taxon>Enterobacterales</taxon>
        <taxon>Enterobacteriaceae</taxon>
        <taxon>Escherichia</taxon>
    </lineage>
</organism>
<evidence type="ECO:0000255" key="1">
    <source>
        <dbReference type="HAMAP-Rule" id="MF_01012"/>
    </source>
</evidence>
<name>RLMC_ECO55</name>
<feature type="chain" id="PRO_1000148894" description="23S rRNA (uracil(747)-C(5))-methyltransferase RlmC">
    <location>
        <begin position="1"/>
        <end position="375"/>
    </location>
</feature>
<feature type="active site" description="Nucleophile" evidence="1">
    <location>
        <position position="334"/>
    </location>
</feature>
<feature type="binding site" evidence="1">
    <location>
        <position position="3"/>
    </location>
    <ligand>
        <name>[4Fe-4S] cluster</name>
        <dbReference type="ChEBI" id="CHEBI:49883"/>
    </ligand>
</feature>
<feature type="binding site" evidence="1">
    <location>
        <position position="11"/>
    </location>
    <ligand>
        <name>[4Fe-4S] cluster</name>
        <dbReference type="ChEBI" id="CHEBI:49883"/>
    </ligand>
</feature>
<feature type="binding site" evidence="1">
    <location>
        <position position="14"/>
    </location>
    <ligand>
        <name>[4Fe-4S] cluster</name>
        <dbReference type="ChEBI" id="CHEBI:49883"/>
    </ligand>
</feature>
<feature type="binding site" evidence="1">
    <location>
        <position position="87"/>
    </location>
    <ligand>
        <name>[4Fe-4S] cluster</name>
        <dbReference type="ChEBI" id="CHEBI:49883"/>
    </ligand>
</feature>
<feature type="binding site" evidence="1">
    <location>
        <position position="212"/>
    </location>
    <ligand>
        <name>S-adenosyl-L-methionine</name>
        <dbReference type="ChEBI" id="CHEBI:59789"/>
    </ligand>
</feature>
<feature type="binding site" evidence="1">
    <location>
        <position position="241"/>
    </location>
    <ligand>
        <name>S-adenosyl-L-methionine</name>
        <dbReference type="ChEBI" id="CHEBI:59789"/>
    </ligand>
</feature>
<feature type="binding site" evidence="1">
    <location>
        <position position="262"/>
    </location>
    <ligand>
        <name>S-adenosyl-L-methionine</name>
        <dbReference type="ChEBI" id="CHEBI:59789"/>
    </ligand>
</feature>
<feature type="binding site" evidence="1">
    <location>
        <position position="307"/>
    </location>
    <ligand>
        <name>S-adenosyl-L-methionine</name>
        <dbReference type="ChEBI" id="CHEBI:59789"/>
    </ligand>
</feature>
<protein>
    <recommendedName>
        <fullName evidence="1">23S rRNA (uracil(747)-C(5))-methyltransferase RlmC</fullName>
        <ecNumber evidence="1">2.1.1.189</ecNumber>
    </recommendedName>
    <alternativeName>
        <fullName evidence="1">23S rRNA(m5U747)-methyltransferase</fullName>
    </alternativeName>
</protein>